<accession>P20674</accession>
<accession>P30045</accession>
<accession>Q8TB65</accession>
<gene>
    <name type="primary">COX5A</name>
</gene>
<organism>
    <name type="scientific">Homo sapiens</name>
    <name type="common">Human</name>
    <dbReference type="NCBI Taxonomy" id="9606"/>
    <lineage>
        <taxon>Eukaryota</taxon>
        <taxon>Metazoa</taxon>
        <taxon>Chordata</taxon>
        <taxon>Craniata</taxon>
        <taxon>Vertebrata</taxon>
        <taxon>Euteleostomi</taxon>
        <taxon>Mammalia</taxon>
        <taxon>Eutheria</taxon>
        <taxon>Euarchontoglires</taxon>
        <taxon>Primates</taxon>
        <taxon>Haplorrhini</taxon>
        <taxon>Catarrhini</taxon>
        <taxon>Hominidae</taxon>
        <taxon>Homo</taxon>
    </lineage>
</organism>
<evidence type="ECO:0000250" key="1">
    <source>
        <dbReference type="UniProtKB" id="P00427"/>
    </source>
</evidence>
<evidence type="ECO:0000250" key="2">
    <source>
        <dbReference type="UniProtKB" id="P12787"/>
    </source>
</evidence>
<evidence type="ECO:0000269" key="3">
    <source>
    </source>
</evidence>
<evidence type="ECO:0000269" key="4">
    <source>
    </source>
</evidence>
<evidence type="ECO:0000269" key="5">
    <source>
    </source>
</evidence>
<evidence type="ECO:0000269" key="6">
    <source>
    </source>
</evidence>
<evidence type="ECO:0000269" key="7">
    <source>
    </source>
</evidence>
<evidence type="ECO:0000269" key="8">
    <source>
    </source>
</evidence>
<evidence type="ECO:0000269" key="9">
    <source>
    </source>
</evidence>
<evidence type="ECO:0000305" key="10"/>
<evidence type="ECO:0007744" key="11">
    <source>
    </source>
</evidence>
<evidence type="ECO:0007744" key="12">
    <source>
    </source>
</evidence>
<proteinExistence type="evidence at protein level"/>
<name>COX5A_HUMAN</name>
<sequence>MLGAALRRCAVAATTRADPRGLLHSARTPGPAVAIQSVRCYSHGSQETDEEFDARWVTYFNKPDIDAWELRKGINTLVTYDMVPEPKIIDAALRACRRLNDFASTVRILEVVKDKAGPHKEIYPYVIQELRPTLNELGISTPEELGLDKV</sequence>
<reference key="1">
    <citation type="journal article" date="1988" name="Gene">
        <title>Subunit Va of human and bovine cytochrome c oxidase is highly conserved.</title>
        <authorList>
            <person name="Rizzuto R."/>
            <person name="Nakase H."/>
            <person name="Zeviani M."/>
            <person name="Dimauro S."/>
            <person name="Schon E.A."/>
        </authorList>
    </citation>
    <scope>NUCLEOTIDE SEQUENCE [MRNA]</scope>
</reference>
<reference key="2">
    <citation type="journal article" date="2008" name="BMC Evol. Biol.">
        <title>Molecular evolution of the cytochrome c oxidase subunit 5A gene in primates.</title>
        <authorList>
            <person name="Uddin M."/>
            <person name="Opazo J.C."/>
            <person name="Wildman D.E."/>
            <person name="Sherwood C.C."/>
            <person name="Hof P.R."/>
            <person name="Goodman M."/>
            <person name="Grossman L.I."/>
        </authorList>
    </citation>
    <scope>NUCLEOTIDE SEQUENCE [MRNA]</scope>
</reference>
<reference key="3">
    <citation type="submission" date="2004-05" db="EMBL/GenBank/DDBJ databases">
        <title>Cloning of human full open reading frames in Gateway(TM) system entry vector (pDONR201).</title>
        <authorList>
            <person name="Ebert L."/>
            <person name="Schick M."/>
            <person name="Neubert P."/>
            <person name="Schatten R."/>
            <person name="Henze S."/>
            <person name="Korn B."/>
        </authorList>
    </citation>
    <scope>NUCLEOTIDE SEQUENCE [LARGE SCALE MRNA]</scope>
</reference>
<reference key="4">
    <citation type="journal article" date="2006" name="Nature">
        <title>Analysis of the DNA sequence and duplication history of human chromosome 15.</title>
        <authorList>
            <person name="Zody M.C."/>
            <person name="Garber M."/>
            <person name="Sharpe T."/>
            <person name="Young S.K."/>
            <person name="Rowen L."/>
            <person name="O'Neill K."/>
            <person name="Whittaker C.A."/>
            <person name="Kamal M."/>
            <person name="Chang J.L."/>
            <person name="Cuomo C.A."/>
            <person name="Dewar K."/>
            <person name="FitzGerald M.G."/>
            <person name="Kodira C.D."/>
            <person name="Madan A."/>
            <person name="Qin S."/>
            <person name="Yang X."/>
            <person name="Abbasi N."/>
            <person name="Abouelleil A."/>
            <person name="Arachchi H.M."/>
            <person name="Baradarani L."/>
            <person name="Birditt B."/>
            <person name="Bloom S."/>
            <person name="Bloom T."/>
            <person name="Borowsky M.L."/>
            <person name="Burke J."/>
            <person name="Butler J."/>
            <person name="Cook A."/>
            <person name="DeArellano K."/>
            <person name="DeCaprio D."/>
            <person name="Dorris L. III"/>
            <person name="Dors M."/>
            <person name="Eichler E.E."/>
            <person name="Engels R."/>
            <person name="Fahey J."/>
            <person name="Fleetwood P."/>
            <person name="Friedman C."/>
            <person name="Gearin G."/>
            <person name="Hall J.L."/>
            <person name="Hensley G."/>
            <person name="Johnson E."/>
            <person name="Jones C."/>
            <person name="Kamat A."/>
            <person name="Kaur A."/>
            <person name="Locke D.P."/>
            <person name="Madan A."/>
            <person name="Munson G."/>
            <person name="Jaffe D.B."/>
            <person name="Lui A."/>
            <person name="Macdonald P."/>
            <person name="Mauceli E."/>
            <person name="Naylor J.W."/>
            <person name="Nesbitt R."/>
            <person name="Nicol R."/>
            <person name="O'Leary S.B."/>
            <person name="Ratcliffe A."/>
            <person name="Rounsley S."/>
            <person name="She X."/>
            <person name="Sneddon K.M.B."/>
            <person name="Stewart S."/>
            <person name="Sougnez C."/>
            <person name="Stone S.M."/>
            <person name="Topham K."/>
            <person name="Vincent D."/>
            <person name="Wang S."/>
            <person name="Zimmer A.R."/>
            <person name="Birren B.W."/>
            <person name="Hood L."/>
            <person name="Lander E.S."/>
            <person name="Nusbaum C."/>
        </authorList>
    </citation>
    <scope>NUCLEOTIDE SEQUENCE [LARGE SCALE GENOMIC DNA]</scope>
</reference>
<reference key="5">
    <citation type="submission" date="2005-09" db="EMBL/GenBank/DDBJ databases">
        <authorList>
            <person name="Mural R.J."/>
            <person name="Istrail S."/>
            <person name="Sutton G.G."/>
            <person name="Florea L."/>
            <person name="Halpern A.L."/>
            <person name="Mobarry C.M."/>
            <person name="Lippert R."/>
            <person name="Walenz B."/>
            <person name="Shatkay H."/>
            <person name="Dew I."/>
            <person name="Miller J.R."/>
            <person name="Flanigan M.J."/>
            <person name="Edwards N.J."/>
            <person name="Bolanos R."/>
            <person name="Fasulo D."/>
            <person name="Halldorsson B.V."/>
            <person name="Hannenhalli S."/>
            <person name="Turner R."/>
            <person name="Yooseph S."/>
            <person name="Lu F."/>
            <person name="Nusskern D.R."/>
            <person name="Shue B.C."/>
            <person name="Zheng X.H."/>
            <person name="Zhong F."/>
            <person name="Delcher A.L."/>
            <person name="Huson D.H."/>
            <person name="Kravitz S.A."/>
            <person name="Mouchard L."/>
            <person name="Reinert K."/>
            <person name="Remington K.A."/>
            <person name="Clark A.G."/>
            <person name="Waterman M.S."/>
            <person name="Eichler E.E."/>
            <person name="Adams M.D."/>
            <person name="Hunkapiller M.W."/>
            <person name="Myers E.W."/>
            <person name="Venter J.C."/>
        </authorList>
    </citation>
    <scope>NUCLEOTIDE SEQUENCE [LARGE SCALE GENOMIC DNA]</scope>
</reference>
<reference key="6">
    <citation type="journal article" date="2004" name="Genome Res.">
        <title>The status, quality, and expansion of the NIH full-length cDNA project: the Mammalian Gene Collection (MGC).</title>
        <authorList>
            <consortium name="The MGC Project Team"/>
        </authorList>
    </citation>
    <scope>NUCLEOTIDE SEQUENCE [LARGE SCALE MRNA]</scope>
    <source>
        <tissue>Brain</tissue>
    </source>
</reference>
<reference key="7">
    <citation type="journal article" date="1993" name="Electrophoresis">
        <title>Human liver protein map: update 1993.</title>
        <authorList>
            <person name="Hughes G.J."/>
            <person name="Frutiger S."/>
            <person name="Paquet N."/>
            <person name="Pasquali C."/>
            <person name="Sanchez J.-C."/>
            <person name="Tissot J.-D."/>
            <person name="Bairoch A."/>
            <person name="Appel R.D."/>
            <person name="Hochstrasser D.F."/>
        </authorList>
    </citation>
    <scope>PROTEIN SEQUENCE OF 42-52</scope>
    <source>
        <tissue>Liver</tissue>
    </source>
</reference>
<reference key="8">
    <citation type="journal article" date="1995" name="Electrophoresis">
        <title>The major protein expression profile and two-dimensional protein database of human heart.</title>
        <authorList>
            <person name="Kovalyov L.I."/>
            <person name="Shishkin S.S."/>
            <person name="Efimochkin A.S."/>
            <person name="Kovalyova M.A."/>
            <person name="Ershova E.S."/>
            <person name="Egorov T.A."/>
            <person name="Musalyamov A.K."/>
        </authorList>
    </citation>
    <scope>PROTEIN SEQUENCE OF 56-64 AND 73-80</scope>
    <source>
        <tissue>Heart</tissue>
    </source>
</reference>
<reference key="9">
    <citation type="journal article" date="2011" name="BMC Syst. Biol.">
        <title>Initial characterization of the human central proteome.</title>
        <authorList>
            <person name="Burkard T.R."/>
            <person name="Planyavsky M."/>
            <person name="Kaupe I."/>
            <person name="Breitwieser F.P."/>
            <person name="Buerckstuemmer T."/>
            <person name="Bennett K.L."/>
            <person name="Superti-Furga G."/>
            <person name="Colinge J."/>
        </authorList>
    </citation>
    <scope>IDENTIFICATION BY MASS SPECTROMETRY [LARGE SCALE ANALYSIS]</scope>
</reference>
<reference key="10">
    <citation type="journal article" date="2014" name="J. Proteomics">
        <title>An enzyme assisted RP-RPLC approach for in-depth analysis of human liver phosphoproteome.</title>
        <authorList>
            <person name="Bian Y."/>
            <person name="Song C."/>
            <person name="Cheng K."/>
            <person name="Dong M."/>
            <person name="Wang F."/>
            <person name="Huang J."/>
            <person name="Sun D."/>
            <person name="Wang L."/>
            <person name="Ye M."/>
            <person name="Zou H."/>
        </authorList>
    </citation>
    <scope>PHOSPHORYLATION [LARGE SCALE ANALYSIS] AT THR-141</scope>
    <scope>IDENTIFICATION BY MASS SPECTROMETRY [LARGE SCALE ANALYSIS]</scope>
    <source>
        <tissue>Liver</tissue>
    </source>
</reference>
<reference key="11">
    <citation type="journal article" date="2015" name="Proteomics">
        <title>N-terminome analysis of the human mitochondrial proteome.</title>
        <authorList>
            <person name="Vaca Jacome A.S."/>
            <person name="Rabilloud T."/>
            <person name="Schaeffer-Reiss C."/>
            <person name="Rompais M."/>
            <person name="Ayoub D."/>
            <person name="Lane L."/>
            <person name="Bairoch A."/>
            <person name="Van Dorsselaer A."/>
            <person name="Carapito C."/>
        </authorList>
    </citation>
    <scope>CLEAVAGE OF TRANSIT PEPTIDE [LARGE SCALE ANALYSIS] AFTER TYR-41</scope>
    <scope>IDENTIFICATION BY MASS SPECTROMETRY [LARGE SCALE ANALYSIS]</scope>
</reference>
<reference key="12">
    <citation type="journal article" date="2016" name="Biochem. J.">
        <title>The mammalian homologue of yeast Afg1 ATPase (lactation elevated 1) mediates degradation of nuclear-encoded complex IV subunits.</title>
        <authorList>
            <person name="Cesnekova J."/>
            <person name="Rodinova M."/>
            <person name="Hansikova H."/>
            <person name="Houstek J."/>
            <person name="Zeman J."/>
            <person name="Stiburek L."/>
        </authorList>
    </citation>
    <scope>INTERACTION WITH AFG1L</scope>
</reference>
<reference key="13">
    <citation type="journal article" date="2019" name="IScience">
        <title>Rewiring of the Human Mitochondrial Interactome during Neuronal Reprogramming Reveals Regulators of the Respirasome and Neurogenesis.</title>
        <authorList>
            <person name="Moutaoufik M.T."/>
            <person name="Malty R."/>
            <person name="Amin S."/>
            <person name="Zhang Q."/>
            <person name="Phanse S."/>
            <person name="Gagarinova A."/>
            <person name="Zilocchi M."/>
            <person name="Hoell L."/>
            <person name="Minic Z."/>
            <person name="Gagarinova M."/>
            <person name="Aoki H."/>
            <person name="Stockwell J."/>
            <person name="Jessulat M."/>
            <person name="Goebels F."/>
            <person name="Broderick K."/>
            <person name="Scott N.E."/>
            <person name="Vlasblom J."/>
            <person name="Musso G."/>
            <person name="Prasad B."/>
            <person name="Lamantea E."/>
            <person name="Garavaglia B."/>
            <person name="Rajput A."/>
            <person name="Murayama K."/>
            <person name="Okazaki Y."/>
            <person name="Foster L.J."/>
            <person name="Bader G.D."/>
            <person name="Cayabyab F.S."/>
            <person name="Babu M."/>
        </authorList>
    </citation>
    <scope>IDENTIFICATION BY MASS SPECTROMETRY</scope>
    <scope>INTERACTION WITH RAB5IF</scope>
</reference>
<reference key="14">
    <citation type="journal article" date="2024" name="Nature">
        <title>Stress response silencing by an E3 ligase mutated in neurodegeneration.</title>
        <authorList>
            <person name="Haakonsen D.L."/>
            <person name="Heider M."/>
            <person name="Ingersoll A.J."/>
            <person name="Vodehnal K."/>
            <person name="Witus S.R."/>
            <person name="Uenaka T."/>
            <person name="Wernig M."/>
            <person name="Rape M."/>
        </authorList>
    </citation>
    <scope>UBIQUITINATION</scope>
</reference>
<reference key="15">
    <citation type="journal article" date="2017" name="Cell">
        <title>Architecture of human mitochondrial respiratory megacomplex I2III2IV2.</title>
        <authorList>
            <person name="Guo R."/>
            <person name="Zong S."/>
            <person name="Wu M."/>
            <person name="Gu J."/>
            <person name="Yang M."/>
        </authorList>
    </citation>
    <scope>STRUCTURE BY ELECTRON MICROSCOPY (3.90 ANGSTROMS)</scope>
    <scope>SUBUNIT</scope>
</reference>
<reference key="16">
    <citation type="journal article" date="2018" name="Cell Res.">
        <title>Structure of the intact 14-subunit human cytochrome c oxidase.</title>
        <authorList>
            <person name="Zong S."/>
            <person name="Wu M."/>
            <person name="Gu J."/>
            <person name="Liu T."/>
            <person name="Guo R."/>
            <person name="Yang M."/>
        </authorList>
    </citation>
    <scope>STRUCTURE BY ELECTRON MICROSCOPY (3.60 ANGSTROMS)</scope>
</reference>
<reference key="17">
    <citation type="journal article" date="2017" name="Hum. Mutat.">
        <title>Mutation in mitochondrial complex IV subunit COX5A causes pulmonary arterial hypertension, lactic acidemia and failure to thrive.</title>
        <authorList>
            <person name="Baertling F."/>
            <person name="Al-Murshedi F."/>
            <person name="Sanchez-Caballero L."/>
            <person name="Al-Senaidi K."/>
            <person name="Joshi N.P."/>
            <person name="Venselaar H."/>
            <person name="van den Brand M.A."/>
            <person name="Nijtmans L.G."/>
            <person name="Rodenburg R.J."/>
        </authorList>
    </citation>
    <scope>INVOLVEMENT IN MC4DN20</scope>
    <scope>VARIANT MC4DN20 CYS-107</scope>
    <scope>CHARACTERIZATION OF VARIANT MC4DN20 CYS-107</scope>
</reference>
<dbReference type="EMBL" id="M22760">
    <property type="protein sequence ID" value="AAA99220.1"/>
    <property type="molecule type" value="mRNA"/>
</dbReference>
<dbReference type="EMBL" id="DQ987236">
    <property type="protein sequence ID" value="ABK92283.1"/>
    <property type="molecule type" value="mRNA"/>
</dbReference>
<dbReference type="EMBL" id="DQ987237">
    <property type="protein sequence ID" value="ABK92284.1"/>
    <property type="molecule type" value="mRNA"/>
</dbReference>
<dbReference type="EMBL" id="CR407649">
    <property type="protein sequence ID" value="CAG28577.1"/>
    <property type="molecule type" value="mRNA"/>
</dbReference>
<dbReference type="EMBL" id="AC125435">
    <property type="status" value="NOT_ANNOTATED_CDS"/>
    <property type="molecule type" value="Genomic_DNA"/>
</dbReference>
<dbReference type="EMBL" id="CH471136">
    <property type="protein sequence ID" value="EAW99288.1"/>
    <property type="molecule type" value="Genomic_DNA"/>
</dbReference>
<dbReference type="EMBL" id="BC024240">
    <property type="protein sequence ID" value="AAH24240.1"/>
    <property type="molecule type" value="mRNA"/>
</dbReference>
<dbReference type="CCDS" id="CCDS10273.1"/>
<dbReference type="PIR" id="JT0342">
    <property type="entry name" value="OTHU5A"/>
</dbReference>
<dbReference type="RefSeq" id="NP_004246.2">
    <property type="nucleotide sequence ID" value="NM_004255.4"/>
</dbReference>
<dbReference type="PDB" id="5Z62">
    <property type="method" value="EM"/>
    <property type="resolution" value="3.60 A"/>
    <property type="chains" value="E=42-150"/>
</dbReference>
<dbReference type="PDBsum" id="5Z62"/>
<dbReference type="SMR" id="P20674"/>
<dbReference type="BioGRID" id="114778">
    <property type="interactions" value="226"/>
</dbReference>
<dbReference type="ComplexPortal" id="CPX-6123">
    <property type="entry name" value="Mitochondrial respiratory chain complex IV"/>
</dbReference>
<dbReference type="CORUM" id="P20674"/>
<dbReference type="FunCoup" id="P20674">
    <property type="interactions" value="1384"/>
</dbReference>
<dbReference type="IntAct" id="P20674">
    <property type="interactions" value="80"/>
</dbReference>
<dbReference type="MINT" id="P20674"/>
<dbReference type="STRING" id="9606.ENSP00000317780"/>
<dbReference type="DrugBank" id="DB02659">
    <property type="generic name" value="Cholic Acid"/>
</dbReference>
<dbReference type="DrugBank" id="DB04464">
    <property type="generic name" value="N-Formylmethionine"/>
</dbReference>
<dbReference type="TCDB" id="3.D.4.11.1">
    <property type="family name" value="the proton-translocating cytochrome oxidase (cox) superfamily"/>
</dbReference>
<dbReference type="GlyGen" id="P20674">
    <property type="glycosylation" value="1 site, 1 O-linked glycan (1 site)"/>
</dbReference>
<dbReference type="iPTMnet" id="P20674"/>
<dbReference type="PhosphoSitePlus" id="P20674"/>
<dbReference type="SwissPalm" id="P20674"/>
<dbReference type="BioMuta" id="COX5A"/>
<dbReference type="DMDM" id="218511986"/>
<dbReference type="OGP" id="P20674"/>
<dbReference type="jPOST" id="P20674"/>
<dbReference type="MassIVE" id="P20674"/>
<dbReference type="PaxDb" id="9606-ENSP00000317780"/>
<dbReference type="PeptideAtlas" id="P20674"/>
<dbReference type="ProteomicsDB" id="53772"/>
<dbReference type="Pumba" id="P20674"/>
<dbReference type="TopDownProteomics" id="P20674"/>
<dbReference type="Antibodypedia" id="27166">
    <property type="antibodies" value="360 antibodies from 32 providers"/>
</dbReference>
<dbReference type="DNASU" id="9377"/>
<dbReference type="Ensembl" id="ENST00000322347.11">
    <property type="protein sequence ID" value="ENSP00000317780.6"/>
    <property type="gene ID" value="ENSG00000178741.12"/>
</dbReference>
<dbReference type="Ensembl" id="ENST00000564811.1">
    <property type="protein sequence ID" value="ENSP00000456386.1"/>
    <property type="gene ID" value="ENSG00000178741.12"/>
</dbReference>
<dbReference type="GeneID" id="9377"/>
<dbReference type="KEGG" id="hsa:9377"/>
<dbReference type="MANE-Select" id="ENST00000322347.11">
    <property type="protein sequence ID" value="ENSP00000317780.6"/>
    <property type="RefSeq nucleotide sequence ID" value="NM_004255.4"/>
    <property type="RefSeq protein sequence ID" value="NP_004246.2"/>
</dbReference>
<dbReference type="UCSC" id="uc002azi.5">
    <property type="organism name" value="human"/>
</dbReference>
<dbReference type="AGR" id="HGNC:2267"/>
<dbReference type="CTD" id="9377"/>
<dbReference type="DisGeNET" id="9377"/>
<dbReference type="GeneCards" id="COX5A"/>
<dbReference type="HGNC" id="HGNC:2267">
    <property type="gene designation" value="COX5A"/>
</dbReference>
<dbReference type="HPA" id="ENSG00000178741">
    <property type="expression patterns" value="Tissue enhanced (heart muscle, skeletal muscle, tongue)"/>
</dbReference>
<dbReference type="MalaCards" id="COX5A"/>
<dbReference type="MIM" id="603773">
    <property type="type" value="gene"/>
</dbReference>
<dbReference type="MIM" id="619064">
    <property type="type" value="phenotype"/>
</dbReference>
<dbReference type="neXtProt" id="NX_P20674"/>
<dbReference type="OpenTargets" id="ENSG00000178741"/>
<dbReference type="Orphanet" id="254905">
    <property type="disease" value="Isolated cytochrome C oxidase deficiency"/>
</dbReference>
<dbReference type="PharmGKB" id="PA26784"/>
<dbReference type="VEuPathDB" id="HostDB:ENSG00000178741"/>
<dbReference type="eggNOG" id="KOG4077">
    <property type="taxonomic scope" value="Eukaryota"/>
</dbReference>
<dbReference type="GeneTree" id="ENSGT00390000001424"/>
<dbReference type="HOGENOM" id="CLU_099086_1_1_1"/>
<dbReference type="InParanoid" id="P20674"/>
<dbReference type="OMA" id="MEKWPAD"/>
<dbReference type="OrthoDB" id="5778907at2759"/>
<dbReference type="PAN-GO" id="P20674">
    <property type="GO annotations" value="2 GO annotations based on evolutionary models"/>
</dbReference>
<dbReference type="PhylomeDB" id="P20674"/>
<dbReference type="TreeFam" id="TF105062"/>
<dbReference type="BioCyc" id="MetaCyc:HS11312-MONOMER"/>
<dbReference type="PathwayCommons" id="P20674"/>
<dbReference type="Reactome" id="R-HSA-5628897">
    <property type="pathway name" value="TP53 Regulates Metabolic Genes"/>
</dbReference>
<dbReference type="Reactome" id="R-HSA-611105">
    <property type="pathway name" value="Respiratory electron transport"/>
</dbReference>
<dbReference type="Reactome" id="R-HSA-9707564">
    <property type="pathway name" value="Cytoprotection by HMOX1"/>
</dbReference>
<dbReference type="Reactome" id="R-HSA-9837999">
    <property type="pathway name" value="Mitochondrial protein degradation"/>
</dbReference>
<dbReference type="Reactome" id="R-HSA-9864848">
    <property type="pathway name" value="Complex IV assembly"/>
</dbReference>
<dbReference type="SignaLink" id="P20674"/>
<dbReference type="SIGNOR" id="P20674"/>
<dbReference type="UniPathway" id="UPA00705"/>
<dbReference type="BioGRID-ORCS" id="9377">
    <property type="hits" value="440 hits in 1164 CRISPR screens"/>
</dbReference>
<dbReference type="CD-CODE" id="FB4E32DD">
    <property type="entry name" value="Presynaptic clusters and postsynaptic densities"/>
</dbReference>
<dbReference type="ChiTaRS" id="COX5A">
    <property type="organism name" value="human"/>
</dbReference>
<dbReference type="GenomeRNAi" id="9377"/>
<dbReference type="Pharos" id="P20674">
    <property type="development level" value="Tbio"/>
</dbReference>
<dbReference type="PRO" id="PR:P20674"/>
<dbReference type="Proteomes" id="UP000005640">
    <property type="component" value="Chromosome 15"/>
</dbReference>
<dbReference type="RNAct" id="P20674">
    <property type="molecule type" value="protein"/>
</dbReference>
<dbReference type="Bgee" id="ENSG00000178741">
    <property type="expression patterns" value="Expressed in heart right ventricle and 202 other cell types or tissues"/>
</dbReference>
<dbReference type="ExpressionAtlas" id="P20674">
    <property type="expression patterns" value="baseline and differential"/>
</dbReference>
<dbReference type="GO" id="GO:0005743">
    <property type="term" value="C:mitochondrial inner membrane"/>
    <property type="evidence" value="ECO:0000314"/>
    <property type="project" value="CAFA"/>
</dbReference>
<dbReference type="GO" id="GO:0005758">
    <property type="term" value="C:mitochondrial intermembrane space"/>
    <property type="evidence" value="ECO:0000304"/>
    <property type="project" value="Reactome"/>
</dbReference>
<dbReference type="GO" id="GO:0031966">
    <property type="term" value="C:mitochondrial membrane"/>
    <property type="evidence" value="ECO:0000314"/>
    <property type="project" value="ComplexPortal"/>
</dbReference>
<dbReference type="GO" id="GO:0005739">
    <property type="term" value="C:mitochondrion"/>
    <property type="evidence" value="ECO:0006056"/>
    <property type="project" value="FlyBase"/>
</dbReference>
<dbReference type="GO" id="GO:0045277">
    <property type="term" value="C:respiratory chain complex IV"/>
    <property type="evidence" value="ECO:0000314"/>
    <property type="project" value="UniProtKB"/>
</dbReference>
<dbReference type="GO" id="GO:0004129">
    <property type="term" value="F:cytochrome-c oxidase activity"/>
    <property type="evidence" value="ECO:0000304"/>
    <property type="project" value="ProtInc"/>
</dbReference>
<dbReference type="GO" id="GO:0009055">
    <property type="term" value="F:electron transfer activity"/>
    <property type="evidence" value="ECO:0000304"/>
    <property type="project" value="UniProtKB"/>
</dbReference>
<dbReference type="GO" id="GO:0046872">
    <property type="term" value="F:metal ion binding"/>
    <property type="evidence" value="ECO:0007669"/>
    <property type="project" value="UniProtKB-KW"/>
</dbReference>
<dbReference type="GO" id="GO:0045333">
    <property type="term" value="P:cellular respiration"/>
    <property type="evidence" value="ECO:0000303"/>
    <property type="project" value="ComplexPortal"/>
</dbReference>
<dbReference type="GO" id="GO:0006123">
    <property type="term" value="P:mitochondrial electron transport, cytochrome c to oxygen"/>
    <property type="evidence" value="ECO:0000318"/>
    <property type="project" value="GO_Central"/>
</dbReference>
<dbReference type="CDD" id="cd00923">
    <property type="entry name" value="Cyt_c_Oxidase_Va"/>
    <property type="match status" value="1"/>
</dbReference>
<dbReference type="FunFam" id="1.25.40.40:FF:000002">
    <property type="entry name" value="cytochrome c oxidase subunit 5A, mitochondrial"/>
    <property type="match status" value="1"/>
</dbReference>
<dbReference type="Gene3D" id="1.25.40.40">
    <property type="entry name" value="Cytochrome c oxidase, subunit Va/VI"/>
    <property type="match status" value="1"/>
</dbReference>
<dbReference type="InterPro" id="IPR003204">
    <property type="entry name" value="Cyt_c_oxidase_su5A/6"/>
</dbReference>
<dbReference type="InterPro" id="IPR036545">
    <property type="entry name" value="Cyt_c_oxidase_su5A/6_sf"/>
</dbReference>
<dbReference type="PANTHER" id="PTHR14200">
    <property type="entry name" value="CYTOCHROME C OXIDASE POLYPEPTIDE"/>
    <property type="match status" value="1"/>
</dbReference>
<dbReference type="PANTHER" id="PTHR14200:SF16">
    <property type="entry name" value="CYTOCHROME C OXIDASE SUBUNIT 5A, MITOCHONDRIAL"/>
    <property type="match status" value="1"/>
</dbReference>
<dbReference type="Pfam" id="PF02284">
    <property type="entry name" value="COX5A"/>
    <property type="match status" value="1"/>
</dbReference>
<dbReference type="SUPFAM" id="SSF48479">
    <property type="entry name" value="Cytochrome c oxidase subunit E"/>
    <property type="match status" value="1"/>
</dbReference>
<feature type="transit peptide" description="Mitochondrion" evidence="9 12">
    <location>
        <begin position="1"/>
        <end position="41"/>
    </location>
</feature>
<feature type="chain" id="PRO_0000006100" description="Cytochrome c oxidase subunit 5A, mitochondrial">
    <location>
        <begin position="42"/>
        <end position="150"/>
    </location>
</feature>
<feature type="short sequence motif" description="SIFI-degron" evidence="8">
    <location>
        <begin position="2"/>
        <end position="17"/>
    </location>
</feature>
<feature type="modified residue" description="N6-acetyllysine" evidence="2">
    <location>
        <position position="87"/>
    </location>
</feature>
<feature type="modified residue" description="N6-acetyllysine" evidence="2">
    <location>
        <position position="113"/>
    </location>
</feature>
<feature type="modified residue" description="Phosphothreonine" evidence="11">
    <location>
        <position position="141"/>
    </location>
</feature>
<feature type="sequence variant" id="VAR_078264" description="In MC4DN20; decreased protein abundance in patient fibroblasts; decreased proteins abundance of mitochondrial respiratory chain complex IV in patient fibroblasts; no effect on respiratory chain complex IV assembly in patient fibroblasts; increased protein abundance of S1 complex IV intermediate in patient fibroblasts." evidence="4">
    <original>R</original>
    <variation>C</variation>
    <location>
        <position position="107"/>
    </location>
</feature>
<feature type="sequence conflict" description="In Ref. 1; AAA99220." evidence="10" ref="1">
    <original>T</original>
    <variation>L</variation>
    <location>
        <position position="105"/>
    </location>
</feature>
<keyword id="KW-0002">3D-structure</keyword>
<keyword id="KW-0007">Acetylation</keyword>
<keyword id="KW-0903">Direct protein sequencing</keyword>
<keyword id="KW-0225">Disease variant</keyword>
<keyword id="KW-0349">Heme</keyword>
<keyword id="KW-0408">Iron</keyword>
<keyword id="KW-0472">Membrane</keyword>
<keyword id="KW-0479">Metal-binding</keyword>
<keyword id="KW-0496">Mitochondrion</keyword>
<keyword id="KW-0999">Mitochondrion inner membrane</keyword>
<keyword id="KW-0597">Phosphoprotein</keyword>
<keyword id="KW-1274">Primary mitochondrial disease</keyword>
<keyword id="KW-1267">Proteomics identification</keyword>
<keyword id="KW-1185">Reference proteome</keyword>
<keyword id="KW-0809">Transit peptide</keyword>
<keyword id="KW-0832">Ubl conjugation</keyword>
<protein>
    <recommendedName>
        <fullName>Cytochrome c oxidase subunit 5A, mitochondrial</fullName>
    </recommendedName>
    <alternativeName>
        <fullName>Cytochrome c oxidase polypeptide Va</fullName>
    </alternativeName>
</protein>
<comment type="function">
    <text evidence="1">Component of the cytochrome c oxidase, the last enzyme in the mitochondrial electron transport chain which drives oxidative phosphorylation. The respiratory chain contains 3 multisubunit complexes succinate dehydrogenase (complex II, CII), ubiquinol-cytochrome c oxidoreductase (cytochrome b-c1 complex, complex III, CIII) and cytochrome c oxidase (complex IV, CIV), that cooperate to transfer electrons derived from NADH and succinate to molecular oxygen, creating an electrochemical gradient over the inner membrane that drives transmembrane transport and the ATP synthase. Cytochrome c oxidase is the component of the respiratory chain that catalyzes the reduction of oxygen to water. Electrons originating from reduced cytochrome c in the intermembrane space (IMS) are transferred via the dinuclear copper A center (CU(A)) of subunit 2 and heme A of subunit 1 to the active site in subunit 1, a binuclear center (BNC) formed by heme A3 and copper B (CU(B)). The BNC reduces molecular oxygen to 2 water molecules using 4 electrons from cytochrome c in the IMS and 4 protons from the mitochondrial matrix.</text>
</comment>
<comment type="pathway">
    <text evidence="1">Energy metabolism; oxidative phosphorylation.</text>
</comment>
<comment type="subunit">
    <text evidence="3 5 6 7">Component of the cytochrome c oxidase (complex IV, CIV), a multisubunit enzyme composed of 14 subunits. The complex is composed of a catalytic core of 3 subunits MT-CO1, MT-CO2 and MT-CO3, encoded in the mitochondrial DNA, and 11 supernumerary subunits COX4I1 (or COX4I2), COX5A, COX5B, COX6A1 (or COX6A2), COX6B1 (or COX6B2), COX6C, COX7A2 (or COX7A1), COX7B, COX7C, COX8A and NDUFA4, which are encoded in the nuclear genome (PubMed:30030519). The complex exists as a monomer or a dimer and forms supercomplexes (SCs) in the inner mitochondrial membrane with NADH-ubiquinone oxidoreductase (complex I, CI) and ubiquinol-cytochrome c oxidoreductase (cytochrome b-c1 complex, complex III, CIII), resulting in different assemblies (supercomplex SCI(1)III(2)IV(1) and megacomplex MCI(2)III(2)IV(2)) (PubMed:28844695). Interacts with AFG1L (PubMed:26759378). Interacts with RAB5IF (PubMed:31536960).</text>
</comment>
<comment type="interaction">
    <interactant intactId="EBI-715032">
        <id>P20674</id>
    </interactant>
    <interactant intactId="EBI-77613">
        <id>P05067</id>
        <label>APP</label>
    </interactant>
    <organismsDiffer>false</organismsDiffer>
    <experiments>3</experiments>
</comment>
<comment type="interaction">
    <interactant intactId="EBI-715032">
        <id>P20674</id>
    </interactant>
    <interactant intactId="EBI-371922">
        <id>Q96B26</id>
        <label>EXOSC8</label>
    </interactant>
    <organismsDiffer>false</organismsDiffer>
    <experiments>3</experiments>
</comment>
<comment type="interaction">
    <interactant intactId="EBI-715032">
        <id>P20674</id>
    </interactant>
    <interactant intactId="EBI-948001">
        <id>Q15323</id>
        <label>KRT31</label>
    </interactant>
    <organismsDiffer>false</organismsDiffer>
    <experiments>3</experiments>
</comment>
<comment type="interaction">
    <interactant intactId="EBI-715032">
        <id>P20674</id>
    </interactant>
    <interactant intactId="EBI-10171697">
        <id>Q6A162</id>
        <label>KRT40</label>
    </interactant>
    <organismsDiffer>false</organismsDiffer>
    <experiments>3</experiments>
</comment>
<comment type="interaction">
    <interactant intactId="EBI-715032">
        <id>P20674</id>
    </interactant>
    <interactant intactId="EBI-6165891">
        <id>Q14696</id>
        <label>MESD</label>
    </interactant>
    <organismsDiffer>false</organismsDiffer>
    <experiments>3</experiments>
</comment>
<comment type="interaction">
    <interactant intactId="EBI-715032">
        <id>P20674</id>
    </interactant>
    <interactant intactId="EBI-9090282">
        <id>P27986-2</id>
        <label>PIK3R1</label>
    </interactant>
    <organismsDiffer>false</organismsDiffer>
    <experiments>3</experiments>
</comment>
<comment type="interaction">
    <interactant intactId="EBI-715032">
        <id>P20674</id>
    </interactant>
    <interactant intactId="EBI-12811275">
        <id>O95238</id>
        <label>SPDEF</label>
    </interactant>
    <organismsDiffer>false</organismsDiffer>
    <experiments>3</experiments>
</comment>
<comment type="subcellular location">
    <subcellularLocation>
        <location evidence="6">Mitochondrion inner membrane</location>
        <topology evidence="6">Peripheral membrane protein</topology>
        <orientation evidence="6">Matrix side</orientation>
    </subcellularLocation>
</comment>
<comment type="PTM">
    <text evidence="8">In response to mitochondrial stress, the precursor protein is ubiquitinated by the SIFI complex in the cytoplasm before mitochondrial import, leading to its degradation (PubMed:38297121). Within the SIFI complex, UBR4 initiates ubiquitin chain that are further elongated or branched by KCMF1 (PubMed:38297121).</text>
</comment>
<comment type="disease" evidence="4">
    <disease id="DI-05941">
        <name>Mitochondrial complex IV deficiency, nuclear type 20</name>
        <acronym>MC4DN20</acronym>
        <description>An autosomal recessive mitochondrial disorder with onset in early infancy. MC4DN20 is characterized by pulmonary arterial hypertension, poor feeding, failure to thrive, hypotonia, delayed development, increased serum lactate and metabolic acidosis. Death in infancy occurs due to cardiorespiratory failure. Patient tissues show variably decreased levels and activity of mitochondrial respiratory complex IV.</description>
        <dbReference type="MIM" id="619064"/>
    </disease>
    <text>The disease may be caused by variants affecting the gene represented in this entry.</text>
</comment>
<comment type="similarity">
    <text evidence="10">Belongs to the cytochrome c oxidase subunit 5A family.</text>
</comment>